<dbReference type="EMBL" id="EU487255">
    <property type="protein sequence ID" value="ACA62937.1"/>
    <property type="molecule type" value="mRNA"/>
</dbReference>
<dbReference type="RefSeq" id="NP_001101401.1">
    <property type="nucleotide sequence ID" value="NM_001107931.3"/>
</dbReference>
<dbReference type="SMR" id="B1PRL5"/>
<dbReference type="BioGRID" id="260358">
    <property type="interactions" value="1"/>
</dbReference>
<dbReference type="FunCoup" id="B1PRL5">
    <property type="interactions" value="21"/>
</dbReference>
<dbReference type="STRING" id="10116.ENSRNOP00000010561"/>
<dbReference type="GlyGen" id="B1PRL5">
    <property type="glycosylation" value="1 site"/>
</dbReference>
<dbReference type="iPTMnet" id="B1PRL5"/>
<dbReference type="PhosphoSitePlus" id="B1PRL5"/>
<dbReference type="PaxDb" id="10116-ENSRNOP00000010561"/>
<dbReference type="PeptideAtlas" id="B1PRL5"/>
<dbReference type="Ensembl" id="ENSRNOT00000010561.5">
    <property type="protein sequence ID" value="ENSRNOP00000010561.2"/>
    <property type="gene ID" value="ENSRNOG00000008027.5"/>
</dbReference>
<dbReference type="GeneID" id="313225"/>
<dbReference type="KEGG" id="rno:313225"/>
<dbReference type="UCSC" id="RGD:1310395">
    <property type="organism name" value="rat"/>
</dbReference>
<dbReference type="AGR" id="RGD:1310395"/>
<dbReference type="CTD" id="347273"/>
<dbReference type="RGD" id="1310395">
    <property type="gene designation" value="Cavin4"/>
</dbReference>
<dbReference type="eggNOG" id="ENOG502QQ9A">
    <property type="taxonomic scope" value="Eukaryota"/>
</dbReference>
<dbReference type="GeneTree" id="ENSGT00950000182910"/>
<dbReference type="HOGENOM" id="CLU_065589_1_0_1"/>
<dbReference type="InParanoid" id="B1PRL5"/>
<dbReference type="OMA" id="AFCPPDD"/>
<dbReference type="OrthoDB" id="8924144at2759"/>
<dbReference type="PhylomeDB" id="B1PRL5"/>
<dbReference type="TreeFam" id="TF331031"/>
<dbReference type="PRO" id="PR:B1PRL5"/>
<dbReference type="Proteomes" id="UP000002494">
    <property type="component" value="Chromosome 5"/>
</dbReference>
<dbReference type="Bgee" id="ENSRNOG00000008027">
    <property type="expression patterns" value="Expressed in quadriceps femoris and 8 other cell types or tissues"/>
</dbReference>
<dbReference type="GO" id="GO:0005901">
    <property type="term" value="C:caveola"/>
    <property type="evidence" value="ECO:0000314"/>
    <property type="project" value="UniProtKB"/>
</dbReference>
<dbReference type="GO" id="GO:0005737">
    <property type="term" value="C:cytoplasm"/>
    <property type="evidence" value="ECO:0000318"/>
    <property type="project" value="GO_Central"/>
</dbReference>
<dbReference type="GO" id="GO:0005829">
    <property type="term" value="C:cytosol"/>
    <property type="evidence" value="ECO:0007669"/>
    <property type="project" value="UniProtKB-SubCell"/>
</dbReference>
<dbReference type="GO" id="GO:0005886">
    <property type="term" value="C:plasma membrane"/>
    <property type="evidence" value="ECO:0000314"/>
    <property type="project" value="UniProtKB"/>
</dbReference>
<dbReference type="GO" id="GO:0042383">
    <property type="term" value="C:sarcolemma"/>
    <property type="evidence" value="ECO:0007669"/>
    <property type="project" value="UniProtKB-SubCell"/>
</dbReference>
<dbReference type="GO" id="GO:0016528">
    <property type="term" value="C:sarcoplasm"/>
    <property type="evidence" value="ECO:0000266"/>
    <property type="project" value="RGD"/>
</dbReference>
<dbReference type="GO" id="GO:0030018">
    <property type="term" value="C:Z disc"/>
    <property type="evidence" value="ECO:0000266"/>
    <property type="project" value="RGD"/>
</dbReference>
<dbReference type="GO" id="GO:0030154">
    <property type="term" value="P:cell differentiation"/>
    <property type="evidence" value="ECO:0007669"/>
    <property type="project" value="UniProtKB-KW"/>
</dbReference>
<dbReference type="GO" id="GO:0007517">
    <property type="term" value="P:muscle organ development"/>
    <property type="evidence" value="ECO:0007669"/>
    <property type="project" value="UniProtKB-KW"/>
</dbReference>
<dbReference type="GO" id="GO:0045944">
    <property type="term" value="P:positive regulation of transcription by RNA polymerase II"/>
    <property type="evidence" value="ECO:0000266"/>
    <property type="project" value="RGD"/>
</dbReference>
<dbReference type="GO" id="GO:0010468">
    <property type="term" value="P:regulation of gene expression"/>
    <property type="evidence" value="ECO:0000266"/>
    <property type="project" value="RGD"/>
</dbReference>
<dbReference type="InterPro" id="IPR026752">
    <property type="entry name" value="Cavin_fam"/>
</dbReference>
<dbReference type="PANTHER" id="PTHR15240:SF4">
    <property type="entry name" value="CAVEOLAE-ASSOCIATED PROTEIN 4"/>
    <property type="match status" value="1"/>
</dbReference>
<dbReference type="PANTHER" id="PTHR15240">
    <property type="entry name" value="CAVIN"/>
    <property type="match status" value="1"/>
</dbReference>
<dbReference type="Pfam" id="PF15237">
    <property type="entry name" value="PTRF_SDPR"/>
    <property type="match status" value="1"/>
</dbReference>
<organism>
    <name type="scientific">Rattus norvegicus</name>
    <name type="common">Rat</name>
    <dbReference type="NCBI Taxonomy" id="10116"/>
    <lineage>
        <taxon>Eukaryota</taxon>
        <taxon>Metazoa</taxon>
        <taxon>Chordata</taxon>
        <taxon>Craniata</taxon>
        <taxon>Vertebrata</taxon>
        <taxon>Euteleostomi</taxon>
        <taxon>Mammalia</taxon>
        <taxon>Eutheria</taxon>
        <taxon>Euarchontoglires</taxon>
        <taxon>Glires</taxon>
        <taxon>Rodentia</taxon>
        <taxon>Myomorpha</taxon>
        <taxon>Muroidea</taxon>
        <taxon>Muridae</taxon>
        <taxon>Murinae</taxon>
        <taxon>Rattus</taxon>
    </lineage>
</organism>
<comment type="function">
    <text evidence="1 5">Modulates the morphology of formed caveolae in cardiomyocytes, but is not required for caveolar formation. Facilitates the recruitment of MAPK1/3 to caveolae within cardiomyocytes and regulates alpha-1 adrenergic receptor-induced hypertrophic responses in cardiomyocytes through MAPK1/3 activation. Contributes to proper membrane localization and stabilization of caveolin-3 (CAV3) in cardiomyocytes (By similarity). Induces RHOA activation and activates NPPA transcription and myofibrillar organization through the Rho/ROCK signaling pathway (PubMed:18332105).</text>
</comment>
<comment type="subunit">
    <text evidence="1 2 6">Component of the CAVIN complex composed of CAVIN1, CAVIN2, CAVIN3 and CAVIN4. Interacts with CAVIN1, CAV3, ADRA1A and ADRA1B. Interacts with CAVIN2; this augments the transactivation of NPPA (By similarity). Interacts with MAPK1 and MAPK3 (PubMed:24567387).</text>
</comment>
<comment type="subcellular location">
    <subcellularLocation>
        <location evidence="1">Cytoplasm</location>
        <location evidence="1">Myofibril</location>
        <location evidence="1">Sarcomere</location>
    </subcellularLocation>
    <subcellularLocation>
        <location evidence="1">Cytoplasm</location>
    </subcellularLocation>
    <subcellularLocation>
        <location evidence="1">Cytoplasm</location>
        <location evidence="1">Cytosol</location>
    </subcellularLocation>
    <subcellularLocation>
        <location evidence="1">Cell membrane</location>
        <location evidence="1">Sarcolemma</location>
    </subcellularLocation>
    <subcellularLocation>
        <location evidence="6">Membrane</location>
        <location evidence="6">Caveola</location>
    </subcellularLocation>
    <subcellularLocation>
        <location evidence="1">Cell membrane</location>
    </subcellularLocation>
    <text evidence="1">In cardiomyocytes, accumulates in the Z-line of the sarcomere. In vascular smooth muscle cells, detected diffusely throughout the cytoplasm. Localizes in the caveolae in a caveolin-dependent manner.</text>
</comment>
<comment type="tissue specificity">
    <text evidence="5">Expressed at much higher levels in cardiomyocytes than in non-cardiomyocytes.</text>
</comment>
<comment type="similarity">
    <text evidence="7">Belongs to the CAVIN family.</text>
</comment>
<proteinExistence type="evidence at protein level"/>
<keyword id="KW-0010">Activator</keyword>
<keyword id="KW-1003">Cell membrane</keyword>
<keyword id="KW-0175">Coiled coil</keyword>
<keyword id="KW-0963">Cytoplasm</keyword>
<keyword id="KW-0217">Developmental protein</keyword>
<keyword id="KW-0221">Differentiation</keyword>
<keyword id="KW-0472">Membrane</keyword>
<keyword id="KW-0517">Myogenesis</keyword>
<keyword id="KW-0597">Phosphoprotein</keyword>
<keyword id="KW-1185">Reference proteome</keyword>
<keyword id="KW-0804">Transcription</keyword>
<keyword id="KW-0805">Transcription regulation</keyword>
<evidence type="ECO:0000250" key="1">
    <source>
        <dbReference type="UniProtKB" id="A2AMM0"/>
    </source>
</evidence>
<evidence type="ECO:0000250" key="2">
    <source>
        <dbReference type="UniProtKB" id="Q5BKX8"/>
    </source>
</evidence>
<evidence type="ECO:0000255" key="3"/>
<evidence type="ECO:0000256" key="4">
    <source>
        <dbReference type="SAM" id="MobiDB-lite"/>
    </source>
</evidence>
<evidence type="ECO:0000269" key="5">
    <source>
    </source>
</evidence>
<evidence type="ECO:0000269" key="6">
    <source>
    </source>
</evidence>
<evidence type="ECO:0000305" key="7"/>
<evidence type="ECO:0000312" key="8">
    <source>
        <dbReference type="EMBL" id="ACA62937.1"/>
    </source>
</evidence>
<evidence type="ECO:0000312" key="9">
    <source>
        <dbReference type="RGD" id="1310395"/>
    </source>
</evidence>
<evidence type="ECO:0007744" key="10">
    <source>
    </source>
</evidence>
<gene>
    <name evidence="9" type="primary">Cavin4</name>
    <name evidence="8" type="synonym">Murc</name>
</gene>
<sequence>MEHNGSASNAGKIHQNRLSSVTEDEDQDAALTIVTVLDRVATVVDSVQASQKRIEERHREMGNAIKSVQIDLLKLSQSHSNTGYVVNKLFEKTRKVSAHIKDVKARVEKQQVRVTKVETKQEEIMKKNKFRVVIFQEDVPCPASLSVVKDRSLPENEEEAEEVFDPPIDLSSDEEYYVEESRSARLRKSGKEHIDHIKKAFSKENMQKTRQNFDKKVSGIRTRIVTPERRERLRQSGERLRQSGERLRQSGERFKKSISNATPSKEAFKIRSLRKPKDPKAEGQEVDRGMGVDIISGSLALGPIHEFHSDGFSETEKEVTKVGYIPQEGGDPPTPEPLKVTFKPQVRVEDDESLLLELKQSS</sequence>
<feature type="chain" id="PRO_0000370221" description="Caveolae-associated protein 4">
    <location>
        <begin position="1"/>
        <end position="362"/>
    </location>
</feature>
<feature type="region of interest" description="Disordered" evidence="4">
    <location>
        <begin position="1"/>
        <end position="24"/>
    </location>
</feature>
<feature type="region of interest" description="Disordered" evidence="4">
    <location>
        <begin position="227"/>
        <end position="261"/>
    </location>
</feature>
<feature type="coiled-coil region" evidence="3">
    <location>
        <begin position="100"/>
        <end position="120"/>
    </location>
</feature>
<feature type="compositionally biased region" description="Basic and acidic residues" evidence="4">
    <location>
        <begin position="227"/>
        <end position="255"/>
    </location>
</feature>
<feature type="modified residue" description="Phosphoserine" evidence="10">
    <location>
        <position position="152"/>
    </location>
</feature>
<feature type="modified residue" description="Phosphoserine" evidence="10">
    <location>
        <position position="171"/>
    </location>
</feature>
<feature type="modified residue" description="Phosphoserine" evidence="10">
    <location>
        <position position="172"/>
    </location>
</feature>
<feature type="modified residue" description="Phosphotyrosine" evidence="1">
    <location>
        <position position="324"/>
    </location>
</feature>
<feature type="modified residue" description="Phosphothreonine" evidence="10">
    <location>
        <position position="334"/>
    </location>
</feature>
<feature type="modified residue" description="Phosphoserine" evidence="1">
    <location>
        <position position="353"/>
    </location>
</feature>
<protein>
    <recommendedName>
        <fullName evidence="9">Caveolae-associated protein 4</fullName>
    </recommendedName>
    <alternativeName>
        <fullName evidence="2">Muscle-related coiled-coil protein</fullName>
    </alternativeName>
    <alternativeName>
        <fullName evidence="8">Muscle-restricted coiled-coil protein</fullName>
    </alternativeName>
</protein>
<name>CAVN4_RAT</name>
<reference evidence="7 8" key="1">
    <citation type="journal article" date="2008" name="Mol. Cell. Biol.">
        <title>MURC, a muscle-restricted coiled-coil protein that modulates the Rho/ROCK pathway, induces cardiac dysfunction and conduction disturbance.</title>
        <authorList>
            <person name="Ogata T."/>
            <person name="Ueyama T."/>
            <person name="Isodono K."/>
            <person name="Tagawa M."/>
            <person name="Takehara N."/>
            <person name="Kawashima T."/>
            <person name="Harada K."/>
            <person name="Takahashi T."/>
            <person name="Shioi T."/>
            <person name="Matsubara H."/>
            <person name="Oh H."/>
        </authorList>
    </citation>
    <scope>NUCLEOTIDE SEQUENCE [MRNA]</scope>
    <scope>FUNCTION</scope>
    <scope>TISSUE SPECIFICITY</scope>
    <source>
        <strain evidence="8">Sprague-Dawley</strain>
        <tissue evidence="5">Cardiac myocyte</tissue>
    </source>
</reference>
<reference key="2">
    <citation type="journal article" date="2012" name="Nat. Commun.">
        <title>Quantitative maps of protein phosphorylation sites across 14 different rat organs and tissues.</title>
        <authorList>
            <person name="Lundby A."/>
            <person name="Secher A."/>
            <person name="Lage K."/>
            <person name="Nordsborg N.B."/>
            <person name="Dmytriyev A."/>
            <person name="Lundby C."/>
            <person name="Olsen J.V."/>
        </authorList>
    </citation>
    <scope>PHOSPHORYLATION [LARGE SCALE ANALYSIS] AT SER-152; SER-171; SER-172 AND THR-334</scope>
    <scope>IDENTIFICATION BY MASS SPECTROMETRY [LARGE SCALE ANALYSIS]</scope>
</reference>
<reference key="3">
    <citation type="journal article" date="2014" name="Proc. Natl. Acad. Sci. U.S.A.">
        <title>MURC/Cavin-4 facilitates recruitment of ERK to caveolae and concentric cardiac hypertrophy induced by alpha1-adrenergic receptors.</title>
        <authorList>
            <person name="Ogata T."/>
            <person name="Naito D."/>
            <person name="Nakanishi N."/>
            <person name="Hayashi Y.K."/>
            <person name="Taniguchi T."/>
            <person name="Miyagawa K."/>
            <person name="Hamaoka T."/>
            <person name="Maruyama N."/>
            <person name="Matoba S."/>
            <person name="Ikeda K."/>
            <person name="Yamada H."/>
            <person name="Oh H."/>
            <person name="Ueyama T."/>
        </authorList>
    </citation>
    <scope>FUNCTION</scope>
    <scope>INTERACTION WITH MAPK1 AND MAPK3</scope>
    <scope>SUBCELLULAR LOCATION</scope>
</reference>
<accession>B1PRL5</accession>